<name>PDIP3_MOUSE</name>
<protein>
    <recommendedName>
        <fullName>Polymerase delta-interacting protein 3</fullName>
    </recommendedName>
    <alternativeName>
        <fullName>S6K1 Aly/REF-like target</fullName>
        <shortName>SKAR</shortName>
    </alternativeName>
</protein>
<organism>
    <name type="scientific">Mus musculus</name>
    <name type="common">Mouse</name>
    <dbReference type="NCBI Taxonomy" id="10090"/>
    <lineage>
        <taxon>Eukaryota</taxon>
        <taxon>Metazoa</taxon>
        <taxon>Chordata</taxon>
        <taxon>Craniata</taxon>
        <taxon>Vertebrata</taxon>
        <taxon>Euteleostomi</taxon>
        <taxon>Mammalia</taxon>
        <taxon>Eutheria</taxon>
        <taxon>Euarchontoglires</taxon>
        <taxon>Glires</taxon>
        <taxon>Rodentia</taxon>
        <taxon>Myomorpha</taxon>
        <taxon>Muroidea</taxon>
        <taxon>Muridae</taxon>
        <taxon>Murinae</taxon>
        <taxon>Mus</taxon>
        <taxon>Mus</taxon>
    </lineage>
</organism>
<keyword id="KW-0007">Acetylation</keyword>
<keyword id="KW-0963">Cytoplasm</keyword>
<keyword id="KW-1017">Isopeptide bond</keyword>
<keyword id="KW-0488">Methylation</keyword>
<keyword id="KW-0509">mRNA transport</keyword>
<keyword id="KW-0539">Nucleus</keyword>
<keyword id="KW-0597">Phosphoprotein</keyword>
<keyword id="KW-1185">Reference proteome</keyword>
<keyword id="KW-0694">RNA-binding</keyword>
<keyword id="KW-0810">Translation regulation</keyword>
<keyword id="KW-0813">Transport</keyword>
<keyword id="KW-0832">Ubl conjugation</keyword>
<comment type="function">
    <text evidence="1">Is involved in regulation of translation. Is preferentially associated with CBC-bound spliced mRNA-protein complexes during the pioneer round of mRNA translation. Contributes to enhanced translational efficiency of spliced over nonspliced mRNAs. Recruits activated ribosomal protein S6 kinase beta-1 I/RPS6KB1 to newly synthesized mRNA. Involved in nuclear mRNA export; probably mediated by association with the TREX complex (By similarity).</text>
</comment>
<comment type="subunit">
    <text evidence="1">Interacts with POLD2. Interacts with NCBP1 and EIF4A3. Associates with the multiprotein exon junction complex (EJC). Interacts with RPS6KB1 (activated). Interacts with ERH. Interacts with THOC2, DDX39B and ZC3H11A; the interactions are ATP-dependent and indicative for an association with the TREX complex (By similarity).</text>
</comment>
<comment type="subcellular location">
    <subcellularLocation>
        <location evidence="1">Nucleus</location>
    </subcellularLocation>
    <subcellularLocation>
        <location evidence="1">Nucleus speckle</location>
    </subcellularLocation>
    <subcellularLocation>
        <location evidence="1">Cytoplasm</location>
    </subcellularLocation>
    <text evidence="1">Nucleocytoplasmic shuttling protein.</text>
</comment>
<reference key="1">
    <citation type="journal article" date="2005" name="Science">
        <title>The transcriptional landscape of the mammalian genome.</title>
        <authorList>
            <person name="Carninci P."/>
            <person name="Kasukawa T."/>
            <person name="Katayama S."/>
            <person name="Gough J."/>
            <person name="Frith M.C."/>
            <person name="Maeda N."/>
            <person name="Oyama R."/>
            <person name="Ravasi T."/>
            <person name="Lenhard B."/>
            <person name="Wells C."/>
            <person name="Kodzius R."/>
            <person name="Shimokawa K."/>
            <person name="Bajic V.B."/>
            <person name="Brenner S.E."/>
            <person name="Batalov S."/>
            <person name="Forrest A.R."/>
            <person name="Zavolan M."/>
            <person name="Davis M.J."/>
            <person name="Wilming L.G."/>
            <person name="Aidinis V."/>
            <person name="Allen J.E."/>
            <person name="Ambesi-Impiombato A."/>
            <person name="Apweiler R."/>
            <person name="Aturaliya R.N."/>
            <person name="Bailey T.L."/>
            <person name="Bansal M."/>
            <person name="Baxter L."/>
            <person name="Beisel K.W."/>
            <person name="Bersano T."/>
            <person name="Bono H."/>
            <person name="Chalk A.M."/>
            <person name="Chiu K.P."/>
            <person name="Choudhary V."/>
            <person name="Christoffels A."/>
            <person name="Clutterbuck D.R."/>
            <person name="Crowe M.L."/>
            <person name="Dalla E."/>
            <person name="Dalrymple B.P."/>
            <person name="de Bono B."/>
            <person name="Della Gatta G."/>
            <person name="di Bernardo D."/>
            <person name="Down T."/>
            <person name="Engstrom P."/>
            <person name="Fagiolini M."/>
            <person name="Faulkner G."/>
            <person name="Fletcher C.F."/>
            <person name="Fukushima T."/>
            <person name="Furuno M."/>
            <person name="Futaki S."/>
            <person name="Gariboldi M."/>
            <person name="Georgii-Hemming P."/>
            <person name="Gingeras T.R."/>
            <person name="Gojobori T."/>
            <person name="Green R.E."/>
            <person name="Gustincich S."/>
            <person name="Harbers M."/>
            <person name="Hayashi Y."/>
            <person name="Hensch T.K."/>
            <person name="Hirokawa N."/>
            <person name="Hill D."/>
            <person name="Huminiecki L."/>
            <person name="Iacono M."/>
            <person name="Ikeo K."/>
            <person name="Iwama A."/>
            <person name="Ishikawa T."/>
            <person name="Jakt M."/>
            <person name="Kanapin A."/>
            <person name="Katoh M."/>
            <person name="Kawasawa Y."/>
            <person name="Kelso J."/>
            <person name="Kitamura H."/>
            <person name="Kitano H."/>
            <person name="Kollias G."/>
            <person name="Krishnan S.P."/>
            <person name="Kruger A."/>
            <person name="Kummerfeld S.K."/>
            <person name="Kurochkin I.V."/>
            <person name="Lareau L.F."/>
            <person name="Lazarevic D."/>
            <person name="Lipovich L."/>
            <person name="Liu J."/>
            <person name="Liuni S."/>
            <person name="McWilliam S."/>
            <person name="Madan Babu M."/>
            <person name="Madera M."/>
            <person name="Marchionni L."/>
            <person name="Matsuda H."/>
            <person name="Matsuzawa S."/>
            <person name="Miki H."/>
            <person name="Mignone F."/>
            <person name="Miyake S."/>
            <person name="Morris K."/>
            <person name="Mottagui-Tabar S."/>
            <person name="Mulder N."/>
            <person name="Nakano N."/>
            <person name="Nakauchi H."/>
            <person name="Ng P."/>
            <person name="Nilsson R."/>
            <person name="Nishiguchi S."/>
            <person name="Nishikawa S."/>
            <person name="Nori F."/>
            <person name="Ohara O."/>
            <person name="Okazaki Y."/>
            <person name="Orlando V."/>
            <person name="Pang K.C."/>
            <person name="Pavan W.J."/>
            <person name="Pavesi G."/>
            <person name="Pesole G."/>
            <person name="Petrovsky N."/>
            <person name="Piazza S."/>
            <person name="Reed J."/>
            <person name="Reid J.F."/>
            <person name="Ring B.Z."/>
            <person name="Ringwald M."/>
            <person name="Rost B."/>
            <person name="Ruan Y."/>
            <person name="Salzberg S.L."/>
            <person name="Sandelin A."/>
            <person name="Schneider C."/>
            <person name="Schoenbach C."/>
            <person name="Sekiguchi K."/>
            <person name="Semple C.A."/>
            <person name="Seno S."/>
            <person name="Sessa L."/>
            <person name="Sheng Y."/>
            <person name="Shibata Y."/>
            <person name="Shimada H."/>
            <person name="Shimada K."/>
            <person name="Silva D."/>
            <person name="Sinclair B."/>
            <person name="Sperling S."/>
            <person name="Stupka E."/>
            <person name="Sugiura K."/>
            <person name="Sultana R."/>
            <person name="Takenaka Y."/>
            <person name="Taki K."/>
            <person name="Tammoja K."/>
            <person name="Tan S.L."/>
            <person name="Tang S."/>
            <person name="Taylor M.S."/>
            <person name="Tegner J."/>
            <person name="Teichmann S.A."/>
            <person name="Ueda H.R."/>
            <person name="van Nimwegen E."/>
            <person name="Verardo R."/>
            <person name="Wei C.L."/>
            <person name="Yagi K."/>
            <person name="Yamanishi H."/>
            <person name="Zabarovsky E."/>
            <person name="Zhu S."/>
            <person name="Zimmer A."/>
            <person name="Hide W."/>
            <person name="Bult C."/>
            <person name="Grimmond S.M."/>
            <person name="Teasdale R.D."/>
            <person name="Liu E.T."/>
            <person name="Brusic V."/>
            <person name="Quackenbush J."/>
            <person name="Wahlestedt C."/>
            <person name="Mattick J.S."/>
            <person name="Hume D.A."/>
            <person name="Kai C."/>
            <person name="Sasaki D."/>
            <person name="Tomaru Y."/>
            <person name="Fukuda S."/>
            <person name="Kanamori-Katayama M."/>
            <person name="Suzuki M."/>
            <person name="Aoki J."/>
            <person name="Arakawa T."/>
            <person name="Iida J."/>
            <person name="Imamura K."/>
            <person name="Itoh M."/>
            <person name="Kato T."/>
            <person name="Kawaji H."/>
            <person name="Kawagashira N."/>
            <person name="Kawashima T."/>
            <person name="Kojima M."/>
            <person name="Kondo S."/>
            <person name="Konno H."/>
            <person name="Nakano K."/>
            <person name="Ninomiya N."/>
            <person name="Nishio T."/>
            <person name="Okada M."/>
            <person name="Plessy C."/>
            <person name="Shibata K."/>
            <person name="Shiraki T."/>
            <person name="Suzuki S."/>
            <person name="Tagami M."/>
            <person name="Waki K."/>
            <person name="Watahiki A."/>
            <person name="Okamura-Oho Y."/>
            <person name="Suzuki H."/>
            <person name="Kawai J."/>
            <person name="Hayashizaki Y."/>
        </authorList>
    </citation>
    <scope>NUCLEOTIDE SEQUENCE [LARGE SCALE MRNA]</scope>
    <source>
        <strain>C57BL/6J</strain>
        <tissue>Cerebellum</tissue>
        <tissue>Embryonic spinal ganglion</tissue>
        <tissue>Eye</tissue>
    </source>
</reference>
<reference key="2">
    <citation type="journal article" date="2009" name="PLoS Biol.">
        <title>Lineage-specific biology revealed by a finished genome assembly of the mouse.</title>
        <authorList>
            <person name="Church D.M."/>
            <person name="Goodstadt L."/>
            <person name="Hillier L.W."/>
            <person name="Zody M.C."/>
            <person name="Goldstein S."/>
            <person name="She X."/>
            <person name="Bult C.J."/>
            <person name="Agarwala R."/>
            <person name="Cherry J.L."/>
            <person name="DiCuccio M."/>
            <person name="Hlavina W."/>
            <person name="Kapustin Y."/>
            <person name="Meric P."/>
            <person name="Maglott D."/>
            <person name="Birtle Z."/>
            <person name="Marques A.C."/>
            <person name="Graves T."/>
            <person name="Zhou S."/>
            <person name="Teague B."/>
            <person name="Potamousis K."/>
            <person name="Churas C."/>
            <person name="Place M."/>
            <person name="Herschleb J."/>
            <person name="Runnheim R."/>
            <person name="Forrest D."/>
            <person name="Amos-Landgraf J."/>
            <person name="Schwartz D.C."/>
            <person name="Cheng Z."/>
            <person name="Lindblad-Toh K."/>
            <person name="Eichler E.E."/>
            <person name="Ponting C.P."/>
        </authorList>
    </citation>
    <scope>NUCLEOTIDE SEQUENCE [LARGE SCALE GENOMIC DNA]</scope>
    <source>
        <strain>C57BL/6J</strain>
    </source>
</reference>
<reference key="3">
    <citation type="journal article" date="2004" name="Genome Res.">
        <title>The status, quality, and expansion of the NIH full-length cDNA project: the Mammalian Gene Collection (MGC).</title>
        <authorList>
            <consortium name="The MGC Project Team"/>
        </authorList>
    </citation>
    <scope>NUCLEOTIDE SEQUENCE [LARGE SCALE MRNA]</scope>
    <source>
        <strain>C57BL/6J</strain>
        <strain>FVB/N</strain>
        <tissue>Liver</tissue>
        <tissue>Olfactory epithelium</tissue>
        <tissue>Salivary gland</tissue>
    </source>
</reference>
<reference key="4">
    <citation type="journal article" date="2007" name="Proc. Natl. Acad. Sci. U.S.A.">
        <title>Large-scale phosphorylation analysis of mouse liver.</title>
        <authorList>
            <person name="Villen J."/>
            <person name="Beausoleil S.A."/>
            <person name="Gerber S.A."/>
            <person name="Gygi S.P."/>
        </authorList>
    </citation>
    <scope>PHOSPHORYLATION [LARGE SCALE ANALYSIS] AT SER-127</scope>
    <scope>IDENTIFICATION BY MASS SPECTROMETRY [LARGE SCALE ANALYSIS]</scope>
    <source>
        <tissue>Liver</tissue>
    </source>
</reference>
<reference key="5">
    <citation type="journal article" date="2010" name="Cell">
        <title>A tissue-specific atlas of mouse protein phosphorylation and expression.</title>
        <authorList>
            <person name="Huttlin E.L."/>
            <person name="Jedrychowski M.P."/>
            <person name="Elias J.E."/>
            <person name="Goswami T."/>
            <person name="Rad R."/>
            <person name="Beausoleil S.A."/>
            <person name="Villen J."/>
            <person name="Haas W."/>
            <person name="Sowa M.E."/>
            <person name="Gygi S.P."/>
        </authorList>
    </citation>
    <scope>PHOSPHORYLATION [LARGE SCALE ANALYSIS] AT SER-127</scope>
    <scope>IDENTIFICATION BY MASS SPECTROMETRY [LARGE SCALE ANALYSIS]</scope>
    <source>
        <tissue>Kidney</tissue>
        <tissue>Lung</tissue>
        <tissue>Spleen</tissue>
        <tissue>Testis</tissue>
    </source>
</reference>
<sequence>MADLSLDELIRKRGTAAKGRLSVRPGIGGVRSRVGIQHSLVNQPARTATFQQRFDARQKIGLSDARLKLGVKDAREKLLQKDARFRIKGKVQDAREMLNSRKQQGTVPQKPRQVADAREKISLKRRSPAAFTSPPIGTVTPALKLTKTIQVPQQKAMVPLHAHPAGMRINVVNNHQAKQNLYDLDEDDDIVVPVPPKQMKFAATGSLVHHMTGLSSSKLSMSKALPLTKVVQNDAYTAPVLPSSVRTKALTSMSRTLVNKEEPPKELPPAEPVLSPLEGTKMTVNNLHPRVTEEDIVELFCVCGALKRARLVHPGVAEVVFVKKDDAITAYKKYNNRCLDGQPMKCNLHMNGNVITSDQPILLRLSDSPSVKKESELPRRGNPASSNPPAEVDPDTVLRALFKSSGASVTTQPTEFKIKL</sequence>
<dbReference type="EMBL" id="AK081139">
    <property type="protein sequence ID" value="BAC38144.1"/>
    <property type="molecule type" value="mRNA"/>
</dbReference>
<dbReference type="EMBL" id="AK083924">
    <property type="protein sequence ID" value="BAC39068.1"/>
    <property type="molecule type" value="mRNA"/>
</dbReference>
<dbReference type="EMBL" id="AK087446">
    <property type="protein sequence ID" value="BAC39877.1"/>
    <property type="molecule type" value="mRNA"/>
</dbReference>
<dbReference type="EMBL" id="AL591952">
    <property type="status" value="NOT_ANNOTATED_CDS"/>
    <property type="molecule type" value="Genomic_DNA"/>
</dbReference>
<dbReference type="EMBL" id="BC037652">
    <property type="protein sequence ID" value="AAH37652.2"/>
    <property type="molecule type" value="mRNA"/>
</dbReference>
<dbReference type="EMBL" id="BC046505">
    <property type="protein sequence ID" value="AAH46505.2"/>
    <property type="molecule type" value="mRNA"/>
</dbReference>
<dbReference type="EMBL" id="BC058225">
    <property type="protein sequence ID" value="AAH58225.2"/>
    <property type="molecule type" value="mRNA"/>
</dbReference>
<dbReference type="CCDS" id="CCDS27697.1"/>
<dbReference type="RefSeq" id="NP_001334011.1">
    <property type="nucleotide sequence ID" value="NM_001347082.1"/>
</dbReference>
<dbReference type="RefSeq" id="NP_848742.1">
    <property type="nucleotide sequence ID" value="NM_178627.4"/>
</dbReference>
<dbReference type="SMR" id="Q8BG81"/>
<dbReference type="BioGRID" id="216286">
    <property type="interactions" value="27"/>
</dbReference>
<dbReference type="FunCoup" id="Q8BG81">
    <property type="interactions" value="4600"/>
</dbReference>
<dbReference type="IntAct" id="Q8BG81">
    <property type="interactions" value="2"/>
</dbReference>
<dbReference type="STRING" id="10090.ENSMUSP00000054548"/>
<dbReference type="iPTMnet" id="Q8BG81"/>
<dbReference type="PhosphoSitePlus" id="Q8BG81"/>
<dbReference type="jPOST" id="Q8BG81"/>
<dbReference type="PaxDb" id="10090-ENSMUSP00000054548"/>
<dbReference type="PeptideAtlas" id="Q8BG81"/>
<dbReference type="ProteomicsDB" id="288022"/>
<dbReference type="Pumba" id="Q8BG81"/>
<dbReference type="Antibodypedia" id="13265">
    <property type="antibodies" value="254 antibodies from 30 providers"/>
</dbReference>
<dbReference type="DNASU" id="73826"/>
<dbReference type="Ensembl" id="ENSMUST00000058793.14">
    <property type="protein sequence ID" value="ENSMUSP00000054548.7"/>
    <property type="gene ID" value="ENSMUSG00000041815.15"/>
</dbReference>
<dbReference type="GeneID" id="73826"/>
<dbReference type="KEGG" id="mmu:73826"/>
<dbReference type="UCSC" id="uc007wzz.1">
    <property type="organism name" value="mouse"/>
</dbReference>
<dbReference type="AGR" id="MGI:1921076"/>
<dbReference type="CTD" id="84271"/>
<dbReference type="MGI" id="MGI:1921076">
    <property type="gene designation" value="Poldip3"/>
</dbReference>
<dbReference type="VEuPathDB" id="HostDB:ENSMUSG00000041815"/>
<dbReference type="eggNOG" id="KOG0533">
    <property type="taxonomic scope" value="Eukaryota"/>
</dbReference>
<dbReference type="GeneTree" id="ENSGT00390000018868"/>
<dbReference type="InParanoid" id="Q8BG81"/>
<dbReference type="OMA" id="SNKRMMD"/>
<dbReference type="OrthoDB" id="346839at2759"/>
<dbReference type="TreeFam" id="TF313312"/>
<dbReference type="Reactome" id="R-MMU-159236">
    <property type="pathway name" value="Transport of Mature mRNA derived from an Intron-Containing Transcript"/>
</dbReference>
<dbReference type="Reactome" id="R-MMU-72187">
    <property type="pathway name" value="mRNA 3'-end processing"/>
</dbReference>
<dbReference type="Reactome" id="R-MMU-73856">
    <property type="pathway name" value="RNA Polymerase II Transcription Termination"/>
</dbReference>
<dbReference type="BioGRID-ORCS" id="73826">
    <property type="hits" value="3 hits in 76 CRISPR screens"/>
</dbReference>
<dbReference type="ChiTaRS" id="Poldip3">
    <property type="organism name" value="mouse"/>
</dbReference>
<dbReference type="PRO" id="PR:Q8BG81"/>
<dbReference type="Proteomes" id="UP000000589">
    <property type="component" value="Chromosome 15"/>
</dbReference>
<dbReference type="RNAct" id="Q8BG81">
    <property type="molecule type" value="protein"/>
</dbReference>
<dbReference type="Bgee" id="ENSMUSG00000041815">
    <property type="expression patterns" value="Expressed in internal carotid artery and 249 other cell types or tissues"/>
</dbReference>
<dbReference type="ExpressionAtlas" id="Q8BG81">
    <property type="expression patterns" value="baseline and differential"/>
</dbReference>
<dbReference type="GO" id="GO:0036464">
    <property type="term" value="C:cytoplasmic ribonucleoprotein granule"/>
    <property type="evidence" value="ECO:0007669"/>
    <property type="project" value="Ensembl"/>
</dbReference>
<dbReference type="GO" id="GO:0016607">
    <property type="term" value="C:nuclear speck"/>
    <property type="evidence" value="ECO:0007669"/>
    <property type="project" value="UniProtKB-SubCell"/>
</dbReference>
<dbReference type="GO" id="GO:0044877">
    <property type="term" value="F:protein-containing complex binding"/>
    <property type="evidence" value="ECO:0007669"/>
    <property type="project" value="Ensembl"/>
</dbReference>
<dbReference type="GO" id="GO:0003723">
    <property type="term" value="F:RNA binding"/>
    <property type="evidence" value="ECO:0007669"/>
    <property type="project" value="UniProtKB-KW"/>
</dbReference>
<dbReference type="GO" id="GO:0016973">
    <property type="term" value="P:poly(A)+ mRNA export from nucleus"/>
    <property type="evidence" value="ECO:0000314"/>
    <property type="project" value="UniProtKB"/>
</dbReference>
<dbReference type="GO" id="GO:0045727">
    <property type="term" value="P:positive regulation of translation"/>
    <property type="evidence" value="ECO:0007669"/>
    <property type="project" value="Ensembl"/>
</dbReference>
<dbReference type="CDD" id="cd12681">
    <property type="entry name" value="RRM_SKAR"/>
    <property type="match status" value="1"/>
</dbReference>
<dbReference type="FunFam" id="3.30.70.330:FF:000243">
    <property type="entry name" value="DNA polymerase delta-interacting protein 3"/>
    <property type="match status" value="1"/>
</dbReference>
<dbReference type="Gene3D" id="3.30.70.330">
    <property type="match status" value="1"/>
</dbReference>
<dbReference type="InterPro" id="IPR051229">
    <property type="entry name" value="ALYREF_mRNA_export"/>
</dbReference>
<dbReference type="InterPro" id="IPR012677">
    <property type="entry name" value="Nucleotide-bd_a/b_plait_sf"/>
</dbReference>
<dbReference type="InterPro" id="IPR034784">
    <property type="entry name" value="PDIP3_RRM"/>
</dbReference>
<dbReference type="InterPro" id="IPR035979">
    <property type="entry name" value="RBD_domain_sf"/>
</dbReference>
<dbReference type="InterPro" id="IPR000504">
    <property type="entry name" value="RRM_dom"/>
</dbReference>
<dbReference type="PANTHER" id="PTHR19965:SF96">
    <property type="entry name" value="POLYMERASE DELTA-INTERACTING PROTEIN 3"/>
    <property type="match status" value="1"/>
</dbReference>
<dbReference type="PANTHER" id="PTHR19965">
    <property type="entry name" value="RNA AND EXPORT FACTOR BINDING PROTEIN"/>
    <property type="match status" value="1"/>
</dbReference>
<dbReference type="Pfam" id="PF00076">
    <property type="entry name" value="RRM_1"/>
    <property type="match status" value="1"/>
</dbReference>
<dbReference type="SMART" id="SM00360">
    <property type="entry name" value="RRM"/>
    <property type="match status" value="1"/>
</dbReference>
<dbReference type="SUPFAM" id="SSF54928">
    <property type="entry name" value="RNA-binding domain, RBD"/>
    <property type="match status" value="1"/>
</dbReference>
<dbReference type="PROSITE" id="PS50102">
    <property type="entry name" value="RRM"/>
    <property type="match status" value="1"/>
</dbReference>
<accession>Q8BG81</accession>
<accession>B2FDB4</accession>
<accession>Q6PE83</accession>
<accession>Q80X99</accession>
<accession>Q8CI28</accession>
<evidence type="ECO:0000250" key="1"/>
<evidence type="ECO:0000250" key="2">
    <source>
        <dbReference type="UniProtKB" id="Q9BY77"/>
    </source>
</evidence>
<evidence type="ECO:0000255" key="3">
    <source>
        <dbReference type="PROSITE-ProRule" id="PRU00176"/>
    </source>
</evidence>
<evidence type="ECO:0000256" key="4">
    <source>
        <dbReference type="SAM" id="MobiDB-lite"/>
    </source>
</evidence>
<evidence type="ECO:0007744" key="5">
    <source>
    </source>
</evidence>
<evidence type="ECO:0007744" key="6">
    <source>
    </source>
</evidence>
<feature type="initiator methionine" description="Removed" evidence="2">
    <location>
        <position position="1"/>
    </location>
</feature>
<feature type="chain" id="PRO_0000081723" description="Polymerase delta-interacting protein 3">
    <location>
        <begin position="2"/>
        <end position="420"/>
    </location>
</feature>
<feature type="domain" description="RRM" evidence="3">
    <location>
        <begin position="280"/>
        <end position="351"/>
    </location>
</feature>
<feature type="region of interest" description="Disordered" evidence="4">
    <location>
        <begin position="256"/>
        <end position="277"/>
    </location>
</feature>
<feature type="region of interest" description="Disordered" evidence="4">
    <location>
        <begin position="369"/>
        <end position="394"/>
    </location>
</feature>
<feature type="compositionally biased region" description="Basic and acidic residues" evidence="4">
    <location>
        <begin position="370"/>
        <end position="379"/>
    </location>
</feature>
<feature type="modified residue" description="N-acetylalanine" evidence="2">
    <location>
        <position position="2"/>
    </location>
</feature>
<feature type="modified residue" description="Phosphoserine" evidence="2">
    <location>
        <position position="5"/>
    </location>
</feature>
<feature type="modified residue" description="Omega-N-methylarginine" evidence="2">
    <location>
        <position position="33"/>
    </location>
</feature>
<feature type="modified residue" description="Phosphoserine" evidence="5 6">
    <location>
        <position position="127"/>
    </location>
</feature>
<feature type="modified residue" description="Phosphothreonine" evidence="2">
    <location>
        <position position="140"/>
    </location>
</feature>
<feature type="modified residue" description="Phosphoserine" evidence="2">
    <location>
        <position position="215"/>
    </location>
</feature>
<feature type="modified residue" description="Phosphoserine" evidence="2">
    <location>
        <position position="217"/>
    </location>
</feature>
<feature type="modified residue" description="Phosphoserine" evidence="2">
    <location>
        <position position="244"/>
    </location>
</feature>
<feature type="modified residue" description="Phosphoserine" evidence="2">
    <location>
        <position position="275"/>
    </location>
</feature>
<feature type="modified residue" description="Phosphoserine" evidence="2">
    <location>
        <position position="385"/>
    </location>
</feature>
<feature type="cross-link" description="Glycyl lysine isopeptide (Lys-Gly) (interchain with G-Cter in SUMO2)" evidence="2">
    <location>
        <position position="200"/>
    </location>
</feature>
<feature type="cross-link" description="Glycyl lysine isopeptide (Lys-Gly) (interchain with G-Cter in SUMO2)" evidence="2">
    <location>
        <position position="223"/>
    </location>
</feature>
<feature type="cross-link" description="Glycyl lysine isopeptide (Lys-Gly) (interchain with G-Cter in SUMO2)" evidence="2">
    <location>
        <position position="248"/>
    </location>
</feature>
<feature type="cross-link" description="Glycyl lysine isopeptide (Lys-Gly) (interchain with G-Cter in SUMO2)" evidence="2">
    <location>
        <position position="372"/>
    </location>
</feature>
<feature type="cross-link" description="Glycyl lysine isopeptide (Lys-Gly) (interchain with G-Cter in SUMO2)" evidence="2">
    <location>
        <position position="417"/>
    </location>
</feature>
<gene>
    <name type="primary">Poldip3</name>
</gene>
<proteinExistence type="evidence at protein level"/>